<keyword id="KW-0021">Allosteric enzyme</keyword>
<keyword id="KW-0328">Glycosyltransferase</keyword>
<keyword id="KW-0342">GTP-binding</keyword>
<keyword id="KW-0460">Magnesium</keyword>
<keyword id="KW-0547">Nucleotide-binding</keyword>
<keyword id="KW-0808">Transferase</keyword>
<accession>A6VC42</accession>
<gene>
    <name evidence="1" type="primary">upp</name>
    <name type="ordered locus">PSPA7_5295</name>
</gene>
<proteinExistence type="inferred from homology"/>
<feature type="chain" id="PRO_1000053759" description="Uracil phosphoribosyltransferase">
    <location>
        <begin position="1"/>
        <end position="212"/>
    </location>
</feature>
<feature type="binding site" evidence="1">
    <location>
        <position position="78"/>
    </location>
    <ligand>
        <name>5-phospho-alpha-D-ribose 1-diphosphate</name>
        <dbReference type="ChEBI" id="CHEBI:58017"/>
    </ligand>
</feature>
<feature type="binding site" evidence="1">
    <location>
        <position position="103"/>
    </location>
    <ligand>
        <name>5-phospho-alpha-D-ribose 1-diphosphate</name>
        <dbReference type="ChEBI" id="CHEBI:58017"/>
    </ligand>
</feature>
<feature type="binding site" evidence="1">
    <location>
        <begin position="130"/>
        <end position="138"/>
    </location>
    <ligand>
        <name>5-phospho-alpha-D-ribose 1-diphosphate</name>
        <dbReference type="ChEBI" id="CHEBI:58017"/>
    </ligand>
</feature>
<feature type="binding site" evidence="1">
    <location>
        <position position="193"/>
    </location>
    <ligand>
        <name>uracil</name>
        <dbReference type="ChEBI" id="CHEBI:17568"/>
    </ligand>
</feature>
<feature type="binding site" evidence="1">
    <location>
        <begin position="198"/>
        <end position="200"/>
    </location>
    <ligand>
        <name>uracil</name>
        <dbReference type="ChEBI" id="CHEBI:17568"/>
    </ligand>
</feature>
<feature type="binding site" evidence="1">
    <location>
        <position position="199"/>
    </location>
    <ligand>
        <name>5-phospho-alpha-D-ribose 1-diphosphate</name>
        <dbReference type="ChEBI" id="CHEBI:58017"/>
    </ligand>
</feature>
<protein>
    <recommendedName>
        <fullName evidence="1">Uracil phosphoribosyltransferase</fullName>
        <ecNumber evidence="1">2.4.2.9</ecNumber>
    </recommendedName>
    <alternativeName>
        <fullName evidence="1">UMP pyrophosphorylase</fullName>
    </alternativeName>
    <alternativeName>
        <fullName evidence="1">UPRTase</fullName>
    </alternativeName>
</protein>
<dbReference type="EC" id="2.4.2.9" evidence="1"/>
<dbReference type="EMBL" id="CP000744">
    <property type="protein sequence ID" value="ABR86181.1"/>
    <property type="molecule type" value="Genomic_DNA"/>
</dbReference>
<dbReference type="RefSeq" id="WP_012077374.1">
    <property type="nucleotide sequence ID" value="NC_009656.1"/>
</dbReference>
<dbReference type="SMR" id="A6VC42"/>
<dbReference type="GeneID" id="77223155"/>
<dbReference type="KEGG" id="pap:PSPA7_5295"/>
<dbReference type="HOGENOM" id="CLU_067096_2_2_6"/>
<dbReference type="UniPathway" id="UPA00574">
    <property type="reaction ID" value="UER00636"/>
</dbReference>
<dbReference type="Proteomes" id="UP000001582">
    <property type="component" value="Chromosome"/>
</dbReference>
<dbReference type="GO" id="GO:0005525">
    <property type="term" value="F:GTP binding"/>
    <property type="evidence" value="ECO:0007669"/>
    <property type="project" value="UniProtKB-KW"/>
</dbReference>
<dbReference type="GO" id="GO:0000287">
    <property type="term" value="F:magnesium ion binding"/>
    <property type="evidence" value="ECO:0007669"/>
    <property type="project" value="UniProtKB-UniRule"/>
</dbReference>
<dbReference type="GO" id="GO:0004845">
    <property type="term" value="F:uracil phosphoribosyltransferase activity"/>
    <property type="evidence" value="ECO:0007669"/>
    <property type="project" value="UniProtKB-UniRule"/>
</dbReference>
<dbReference type="GO" id="GO:0044206">
    <property type="term" value="P:UMP salvage"/>
    <property type="evidence" value="ECO:0007669"/>
    <property type="project" value="UniProtKB-UniRule"/>
</dbReference>
<dbReference type="GO" id="GO:0006223">
    <property type="term" value="P:uracil salvage"/>
    <property type="evidence" value="ECO:0007669"/>
    <property type="project" value="InterPro"/>
</dbReference>
<dbReference type="CDD" id="cd06223">
    <property type="entry name" value="PRTases_typeI"/>
    <property type="match status" value="1"/>
</dbReference>
<dbReference type="FunFam" id="3.40.50.2020:FF:000003">
    <property type="entry name" value="Uracil phosphoribosyltransferase"/>
    <property type="match status" value="1"/>
</dbReference>
<dbReference type="Gene3D" id="3.40.50.2020">
    <property type="match status" value="1"/>
</dbReference>
<dbReference type="HAMAP" id="MF_01218_B">
    <property type="entry name" value="Upp_B"/>
    <property type="match status" value="1"/>
</dbReference>
<dbReference type="InterPro" id="IPR000836">
    <property type="entry name" value="PRibTrfase_dom"/>
</dbReference>
<dbReference type="InterPro" id="IPR029057">
    <property type="entry name" value="PRTase-like"/>
</dbReference>
<dbReference type="InterPro" id="IPR034332">
    <property type="entry name" value="Upp_B"/>
</dbReference>
<dbReference type="InterPro" id="IPR050054">
    <property type="entry name" value="UPRTase/APRTase"/>
</dbReference>
<dbReference type="InterPro" id="IPR005765">
    <property type="entry name" value="Ura_phspho_trans"/>
</dbReference>
<dbReference type="NCBIfam" id="NF001097">
    <property type="entry name" value="PRK00129.1"/>
    <property type="match status" value="1"/>
</dbReference>
<dbReference type="NCBIfam" id="TIGR01091">
    <property type="entry name" value="upp"/>
    <property type="match status" value="1"/>
</dbReference>
<dbReference type="PANTHER" id="PTHR32315">
    <property type="entry name" value="ADENINE PHOSPHORIBOSYLTRANSFERASE"/>
    <property type="match status" value="1"/>
</dbReference>
<dbReference type="PANTHER" id="PTHR32315:SF4">
    <property type="entry name" value="URACIL PHOSPHORIBOSYLTRANSFERASE, CHLOROPLASTIC"/>
    <property type="match status" value="1"/>
</dbReference>
<dbReference type="Pfam" id="PF14681">
    <property type="entry name" value="UPRTase"/>
    <property type="match status" value="1"/>
</dbReference>
<dbReference type="SUPFAM" id="SSF53271">
    <property type="entry name" value="PRTase-like"/>
    <property type="match status" value="1"/>
</dbReference>
<organism>
    <name type="scientific">Pseudomonas paraeruginosa (strain DSM 24068 / PA7)</name>
    <name type="common">Pseudomonas aeruginosa (strain PA7)</name>
    <dbReference type="NCBI Taxonomy" id="381754"/>
    <lineage>
        <taxon>Bacteria</taxon>
        <taxon>Pseudomonadati</taxon>
        <taxon>Pseudomonadota</taxon>
        <taxon>Gammaproteobacteria</taxon>
        <taxon>Pseudomonadales</taxon>
        <taxon>Pseudomonadaceae</taxon>
        <taxon>Pseudomonas</taxon>
        <taxon>Pseudomonas paraeruginosa</taxon>
    </lineage>
</organism>
<reference key="1">
    <citation type="submission" date="2007-06" db="EMBL/GenBank/DDBJ databases">
        <authorList>
            <person name="Dodson R.J."/>
            <person name="Harkins D."/>
            <person name="Paulsen I.T."/>
        </authorList>
    </citation>
    <scope>NUCLEOTIDE SEQUENCE [LARGE SCALE GENOMIC DNA]</scope>
    <source>
        <strain>DSM 24068 / PA7</strain>
    </source>
</reference>
<comment type="function">
    <text evidence="1">Catalyzes the conversion of uracil and 5-phospho-alpha-D-ribose 1-diphosphate (PRPP) to UMP and diphosphate.</text>
</comment>
<comment type="catalytic activity">
    <reaction evidence="1">
        <text>UMP + diphosphate = 5-phospho-alpha-D-ribose 1-diphosphate + uracil</text>
        <dbReference type="Rhea" id="RHEA:13017"/>
        <dbReference type="ChEBI" id="CHEBI:17568"/>
        <dbReference type="ChEBI" id="CHEBI:33019"/>
        <dbReference type="ChEBI" id="CHEBI:57865"/>
        <dbReference type="ChEBI" id="CHEBI:58017"/>
        <dbReference type="EC" id="2.4.2.9"/>
    </reaction>
</comment>
<comment type="cofactor">
    <cofactor evidence="1">
        <name>Mg(2+)</name>
        <dbReference type="ChEBI" id="CHEBI:18420"/>
    </cofactor>
    <text evidence="1">Binds 1 Mg(2+) ion per subunit. The magnesium is bound as Mg-PRPP.</text>
</comment>
<comment type="activity regulation">
    <text evidence="1">Allosterically activated by GTP.</text>
</comment>
<comment type="pathway">
    <text evidence="1">Pyrimidine metabolism; UMP biosynthesis via salvage pathway; UMP from uracil: step 1/1.</text>
</comment>
<comment type="similarity">
    <text evidence="1">Belongs to the UPRTase family.</text>
</comment>
<name>UPP_PSEP7</name>
<sequence>MPVHEIRHPLIRHKLGLMRRADISTKNFRELAQEVGALLTYEATKDLPLEQYEIPGWAGPVTVEKISGKKITVVPILRAGIGMLDGVLSLVPGAKVSAVGVARNEETLEARTYLEKLAPDIAERRSLIIDPMLATGGSMVATIDLLKKAGSKEIRAMVLVAAPEGIEAVRQAHPDVIIYTASIDEKLDENGYIIPGLGDAGDKIFGTKQKEA</sequence>
<evidence type="ECO:0000255" key="1">
    <source>
        <dbReference type="HAMAP-Rule" id="MF_01218"/>
    </source>
</evidence>